<gene>
    <name type="primary">SMN1</name>
    <name type="synonym">SMN</name>
</gene>
<proteinExistence type="evidence at transcript level"/>
<organism>
    <name type="scientific">Canis lupus familiaris</name>
    <name type="common">Dog</name>
    <name type="synonym">Canis familiaris</name>
    <dbReference type="NCBI Taxonomy" id="9615"/>
    <lineage>
        <taxon>Eukaryota</taxon>
        <taxon>Metazoa</taxon>
        <taxon>Chordata</taxon>
        <taxon>Craniata</taxon>
        <taxon>Vertebrata</taxon>
        <taxon>Euteleostomi</taxon>
        <taxon>Mammalia</taxon>
        <taxon>Eutheria</taxon>
        <taxon>Laurasiatheria</taxon>
        <taxon>Carnivora</taxon>
        <taxon>Caniformia</taxon>
        <taxon>Canidae</taxon>
        <taxon>Canis</taxon>
    </lineage>
</organism>
<comment type="function">
    <text evidence="3">The SMN complex catalyzes the assembly of small nuclear ribonucleoproteins (snRNPs), the building blocks of the spliceosome, and thereby plays an important role in the splicing of cellular pre-mRNAs. Most spliceosomal snRNPs contain a common set of Sm proteins SNRPB, SNRPD1, SNRPD2, SNRPD3, SNRPE, SNRPF and SNRPG that assemble in a heptameric protein ring on the Sm site of the small nuclear RNA to form the core snRNP (Sm core). In the cytosol, the Sm proteins SNRPD1, SNRPD2, SNRPE, SNRPF and SNRPG are trapped in an inactive 6S pICln-Sm complex by the chaperone CLNS1A that controls the assembly of the core snRNP. To assemble core snRNPs, the SMN complex accepts the trapped 5Sm proteins from CLNS1A forming an intermediate. Binding of snRNA inside 5Sm ultimately triggers eviction of the SMN complex, thereby allowing binding of SNRPD3 and SNRPB to complete assembly of the core snRNP. Within the SMN complex, SMN1 acts as a structural backbone and together with GEMIN2 it gathers the Sm complex subunits. Ensures the correct splicing of U12 intron-containing genes that may be important for normal motor and proprioceptive neurons development. Also required for resolving RNA-DNA hybrids created by RNA polymerase II, that form R-loop in transcription terminal regions, an important step in proper transcription termination. May also play a role in the metabolism of small nucleolar ribonucleoprotein (snoRNPs).</text>
</comment>
<comment type="subunit">
    <text evidence="3">Homooligomer; may form higher order homooligomers in the dimer to octamer range. Part of the core SMN complex that contains SMN1, GEMIN2/SIP1, DDX20/GEMIN3, GEMIN4, GEMIN5, GEMIN6, GEMIN7, GEMIN8 and STRAP/UNRIP. Part of the SMN-Sm complex that contains SMN1, GEMIN2/SIP1, DDX20/GEMIN3, GEMIN4, GEMIN5, GEMIN6, GEMIN7, GEMIN8, STRAP/UNRIP and the Sm proteins SNRPB, SNRPD1, SNRPD2, SNRPD3, SNRPE, SNRPF and SNRPG. Component of an import snRNP complex composed of KPNB1, RNUT1, SMN1 and ZNF259. Interacts with DDX20, FBL, NOLA1, RNUT1, SYNCRIP and with several spliceosomal snRNP core Sm proteins, including SNRPB, SNRPD1, SNRPD2, SNRPD3, SNRPE and ILF3. Interacts with GEMIN2; the interaction is direct. Interacts with GEMIN3; the interaction is direct. Interacts with GEMIN8; the interaction is direct. Interacts with SNRPB; the interaction is direct. Interacts (via Tudor domain) with SNRPD1 (via C-terminus); the interaction is direct. Interacts with SNRPD2; the interaction is direct. Interacts (via Tudor domain) with SNRPD3 (via C-terminus); the interaction is direct. Interacts with SNRPE; the interaction is direct. Interacts with OSTF1, LSM10, LSM11 and RPP20/POP7. Interacts (via C-terminal region) with ZPR1 (via C-terminal region). Interacts (via Tudor domain) with COIL. Interacts with SETX; recruits SETX to POLR2A. Interacts with POLR2A (via the C-terminal domain (CTD)). Interacts with PRMT5. Interacts with XRN2. Interacts (via C-terminus) with FMR1 (via C-terminus); the interaction is direct and occurs in a RNA-independent manner. Interacts (via Tudor domain) with SF3B2 ('Arg-508'-methylated form). Interacts with WRAP53/TCAB1. Interacts (via Tudor domain) with ELAVL4 in an RNA-independent manner; the interaction is required for localization of ELAVL4 to RNA granules. Interacts with FRG1.</text>
</comment>
<comment type="subcellular location">
    <subcellularLocation>
        <location evidence="3">Nucleus</location>
        <location evidence="3">Gem</location>
    </subcellularLocation>
    <subcellularLocation>
        <location evidence="3">Nucleus</location>
        <location evidence="3">Cajal body</location>
    </subcellularLocation>
    <subcellularLocation>
        <location evidence="3">Cytoplasm</location>
    </subcellularLocation>
    <subcellularLocation>
        <location evidence="3">Cytoplasmic granule</location>
    </subcellularLocation>
    <subcellularLocation>
        <location evidence="3">Perikaryon</location>
    </subcellularLocation>
    <subcellularLocation>
        <location evidence="3">Cell projection</location>
        <location evidence="3">Neuron projection</location>
    </subcellularLocation>
    <subcellularLocation>
        <location evidence="2">Cell projection</location>
        <location evidence="2">Axon</location>
    </subcellularLocation>
    <subcellularLocation>
        <location evidence="2">Cytoplasm</location>
        <location evidence="2">Myofibril</location>
        <location evidence="2">Sarcomere</location>
        <location evidence="2">Z line</location>
    </subcellularLocation>
    <text evidence="2 3">Colocalizes with actin and at the Z-line of skeletal muscle (By similarity). Under stress conditions colocalizes with RPP20/POP7 in punctuated cytoplasmic granules. Colocalized and redistributed with ZPR1 from the cytoplasm to nuclear gems (Gemini of coiled bodies) and Cajal bodies. Colocalizes with FMR1 in cytoplasmic granules in the soma and neurite cell processes (By similarity).</text>
</comment>
<comment type="domain">
    <text evidence="3">The Tudor domain mediates association with dimethylarginines, which are common in snRNP proteins.</text>
</comment>
<comment type="similarity">
    <text evidence="6">Belongs to the SMN family.</text>
</comment>
<name>SMN_CANLF</name>
<evidence type="ECO:0000250" key="1"/>
<evidence type="ECO:0000250" key="2">
    <source>
        <dbReference type="UniProtKB" id="P97801"/>
    </source>
</evidence>
<evidence type="ECO:0000250" key="3">
    <source>
        <dbReference type="UniProtKB" id="Q16637"/>
    </source>
</evidence>
<evidence type="ECO:0000255" key="4">
    <source>
        <dbReference type="PROSITE-ProRule" id="PRU00211"/>
    </source>
</evidence>
<evidence type="ECO:0000256" key="5">
    <source>
        <dbReference type="SAM" id="MobiDB-lite"/>
    </source>
</evidence>
<evidence type="ECO:0000305" key="6"/>
<keyword id="KW-0966">Cell projection</keyword>
<keyword id="KW-0963">Cytoplasm</keyword>
<keyword id="KW-1017">Isopeptide bond</keyword>
<keyword id="KW-0507">mRNA processing</keyword>
<keyword id="KW-0508">mRNA splicing</keyword>
<keyword id="KW-0524">Neurogenesis</keyword>
<keyword id="KW-0539">Nucleus</keyword>
<keyword id="KW-0597">Phosphoprotein</keyword>
<keyword id="KW-1185">Reference proteome</keyword>
<keyword id="KW-0694">RNA-binding</keyword>
<keyword id="KW-0832">Ubl conjugation</keyword>
<protein>
    <recommendedName>
        <fullName>Survival motor neuron protein</fullName>
    </recommendedName>
</protein>
<feature type="chain" id="PRO_0000218902" description="Survival motor neuron protein">
    <location>
        <begin position="1"/>
        <end position="287"/>
    </location>
</feature>
<feature type="domain" description="Tudor" evidence="4">
    <location>
        <begin position="86"/>
        <end position="146"/>
    </location>
</feature>
<feature type="region of interest" description="Disordered" evidence="5">
    <location>
        <begin position="1"/>
        <end position="27"/>
    </location>
</feature>
<feature type="region of interest" description="P1 (binding site for GEMIN2)" evidence="1">
    <location>
        <begin position="8"/>
        <end position="39"/>
    </location>
</feature>
<feature type="region of interest" description="Disordered" evidence="5">
    <location>
        <begin position="52"/>
        <end position="83"/>
    </location>
</feature>
<feature type="region of interest" description="Required for interaction with RPP20/POP7" evidence="1">
    <location>
        <begin position="92"/>
        <end position="205"/>
    </location>
</feature>
<feature type="region of interest" description="Disordered" evidence="5">
    <location>
        <begin position="148"/>
        <end position="216"/>
    </location>
</feature>
<feature type="region of interest" description="P2 (binding site for SM B)" evidence="1">
    <location>
        <begin position="234"/>
        <end position="261"/>
    </location>
</feature>
<feature type="region of interest" description="Required for interaction with SYNCRIP" evidence="1">
    <location>
        <begin position="273"/>
        <end position="287"/>
    </location>
</feature>
<feature type="compositionally biased region" description="Basic residues" evidence="5">
    <location>
        <begin position="63"/>
        <end position="77"/>
    </location>
</feature>
<feature type="compositionally biased region" description="Polar residues" evidence="5">
    <location>
        <begin position="157"/>
        <end position="180"/>
    </location>
</feature>
<feature type="modified residue" description="Phosphothreonine" evidence="3">
    <location>
        <position position="20"/>
    </location>
</feature>
<feature type="modified residue" description="Phosphoserine" evidence="3">
    <location>
        <position position="23"/>
    </location>
</feature>
<feature type="modified residue" description="Phosphoserine" evidence="3">
    <location>
        <position position="26"/>
    </location>
</feature>
<feature type="modified residue" description="Phosphothreonine" evidence="3">
    <location>
        <position position="64"/>
    </location>
</feature>
<feature type="cross-link" description="Glycyl lysine isopeptide (Lys-Gly) (interchain with G-Cter in SUMO2)" evidence="3">
    <location>
        <position position="46"/>
    </location>
</feature>
<feature type="cross-link" description="Glycyl lysine isopeptide (Lys-Gly) (interchain with G-Cter in SUMO2)" evidence="3">
    <location>
        <position position="205"/>
    </location>
</feature>
<reference key="1">
    <citation type="journal article" date="1998" name="J. Hered.">
        <title>Hereditary canine spinal muscular atrophy is phenotypically similar but molecularly distinct from human spinal muscular atrophy.</title>
        <authorList>
            <person name="Blazej R.G."/>
            <person name="Mellersh C.S."/>
            <person name="Cork L.C."/>
            <person name="Ostrander E.A."/>
        </authorList>
    </citation>
    <scope>NUCLEOTIDE SEQUENCE [MRNA]</scope>
</reference>
<accession>O02771</accession>
<dbReference type="EMBL" id="U50746">
    <property type="protein sequence ID" value="AAB58318.1"/>
    <property type="molecule type" value="mRNA"/>
</dbReference>
<dbReference type="RefSeq" id="NP_001003226.1">
    <property type="nucleotide sequence ID" value="NM_001003226.2"/>
</dbReference>
<dbReference type="BMRB" id="O02771"/>
<dbReference type="SMR" id="O02771"/>
<dbReference type="FunCoup" id="O02771">
    <property type="interactions" value="138"/>
</dbReference>
<dbReference type="STRING" id="9615.ENSCAFP00000044258"/>
<dbReference type="PaxDb" id="9612-ENSCAFP00000011560"/>
<dbReference type="GeneID" id="403896"/>
<dbReference type="KEGG" id="cfa:403896"/>
<dbReference type="CTD" id="39844"/>
<dbReference type="eggNOG" id="KOG4327">
    <property type="taxonomic scope" value="Eukaryota"/>
</dbReference>
<dbReference type="InParanoid" id="O02771"/>
<dbReference type="OrthoDB" id="27626at33554"/>
<dbReference type="Proteomes" id="UP000002254">
    <property type="component" value="Unplaced"/>
</dbReference>
<dbReference type="Proteomes" id="UP000694429">
    <property type="component" value="Unplaced"/>
</dbReference>
<dbReference type="Proteomes" id="UP000694542">
    <property type="component" value="Unplaced"/>
</dbReference>
<dbReference type="Proteomes" id="UP000805418">
    <property type="component" value="Unplaced"/>
</dbReference>
<dbReference type="GO" id="GO:0030424">
    <property type="term" value="C:axon"/>
    <property type="evidence" value="ECO:0007669"/>
    <property type="project" value="UniProtKB-SubCell"/>
</dbReference>
<dbReference type="GO" id="GO:0015030">
    <property type="term" value="C:Cajal body"/>
    <property type="evidence" value="ECO:0000250"/>
    <property type="project" value="UniProtKB"/>
</dbReference>
<dbReference type="GO" id="GO:0005737">
    <property type="term" value="C:cytoplasm"/>
    <property type="evidence" value="ECO:0000250"/>
    <property type="project" value="UniProtKB"/>
</dbReference>
<dbReference type="GO" id="GO:0036464">
    <property type="term" value="C:cytoplasmic ribonucleoprotein granule"/>
    <property type="evidence" value="ECO:0000250"/>
    <property type="project" value="UniProtKB"/>
</dbReference>
<dbReference type="GO" id="GO:0005829">
    <property type="term" value="C:cytosol"/>
    <property type="evidence" value="ECO:0000250"/>
    <property type="project" value="UniProtKB"/>
</dbReference>
<dbReference type="GO" id="GO:0097504">
    <property type="term" value="C:Gemini of Cajal bodies"/>
    <property type="evidence" value="ECO:0000250"/>
    <property type="project" value="UniProtKB"/>
</dbReference>
<dbReference type="GO" id="GO:0043005">
    <property type="term" value="C:neuron projection"/>
    <property type="evidence" value="ECO:0000250"/>
    <property type="project" value="UniProtKB"/>
</dbReference>
<dbReference type="GO" id="GO:0005654">
    <property type="term" value="C:nucleoplasm"/>
    <property type="evidence" value="ECO:0000250"/>
    <property type="project" value="UniProtKB"/>
</dbReference>
<dbReference type="GO" id="GO:0005634">
    <property type="term" value="C:nucleus"/>
    <property type="evidence" value="ECO:0000250"/>
    <property type="project" value="UniProtKB"/>
</dbReference>
<dbReference type="GO" id="GO:0043204">
    <property type="term" value="C:perikaryon"/>
    <property type="evidence" value="ECO:0000250"/>
    <property type="project" value="UniProtKB"/>
</dbReference>
<dbReference type="GO" id="GO:0032797">
    <property type="term" value="C:SMN complex"/>
    <property type="evidence" value="ECO:0000250"/>
    <property type="project" value="UniProtKB"/>
</dbReference>
<dbReference type="GO" id="GO:0034719">
    <property type="term" value="C:SMN-Sm protein complex"/>
    <property type="evidence" value="ECO:0000250"/>
    <property type="project" value="UniProtKB"/>
</dbReference>
<dbReference type="GO" id="GO:0030018">
    <property type="term" value="C:Z disc"/>
    <property type="evidence" value="ECO:0007669"/>
    <property type="project" value="UniProtKB-SubCell"/>
</dbReference>
<dbReference type="GO" id="GO:0003723">
    <property type="term" value="F:RNA binding"/>
    <property type="evidence" value="ECO:0007669"/>
    <property type="project" value="UniProtKB-KW"/>
</dbReference>
<dbReference type="GO" id="GO:0006353">
    <property type="term" value="P:DNA-templated transcription termination"/>
    <property type="evidence" value="ECO:0000250"/>
    <property type="project" value="UniProtKB"/>
</dbReference>
<dbReference type="GO" id="GO:0007399">
    <property type="term" value="P:nervous system development"/>
    <property type="evidence" value="ECO:0007669"/>
    <property type="project" value="UniProtKB-KW"/>
</dbReference>
<dbReference type="GO" id="GO:0000387">
    <property type="term" value="P:spliceosomal snRNP assembly"/>
    <property type="evidence" value="ECO:0000250"/>
    <property type="project" value="UniProtKB"/>
</dbReference>
<dbReference type="CDD" id="cd22852">
    <property type="entry name" value="SMN_C"/>
    <property type="match status" value="1"/>
</dbReference>
<dbReference type="CDD" id="cd22851">
    <property type="entry name" value="SMN_N"/>
    <property type="match status" value="1"/>
</dbReference>
<dbReference type="CDD" id="cd20398">
    <property type="entry name" value="Tudor_SMN"/>
    <property type="match status" value="1"/>
</dbReference>
<dbReference type="FunFam" id="3.40.190.10:FF:000110">
    <property type="entry name" value="Survival motor neuron protein 1"/>
    <property type="match status" value="1"/>
</dbReference>
<dbReference type="FunFam" id="2.30.30.140:FF:000038">
    <property type="entry name" value="Survival of motor neuron-related-splicing factor 30"/>
    <property type="match status" value="1"/>
</dbReference>
<dbReference type="Gene3D" id="2.30.30.140">
    <property type="match status" value="1"/>
</dbReference>
<dbReference type="Gene3D" id="3.40.190.10">
    <property type="entry name" value="Periplasmic binding protein-like II"/>
    <property type="match status" value="1"/>
</dbReference>
<dbReference type="InterPro" id="IPR040424">
    <property type="entry name" value="Smn1"/>
</dbReference>
<dbReference type="InterPro" id="IPR047313">
    <property type="entry name" value="SMN_C"/>
</dbReference>
<dbReference type="InterPro" id="IPR049481">
    <property type="entry name" value="SMN_G2-BD"/>
</dbReference>
<dbReference type="InterPro" id="IPR010304">
    <property type="entry name" value="SMN_Tudor"/>
</dbReference>
<dbReference type="InterPro" id="IPR002999">
    <property type="entry name" value="Tudor"/>
</dbReference>
<dbReference type="InterPro" id="IPR047298">
    <property type="entry name" value="Tudor_SMN_eumet"/>
</dbReference>
<dbReference type="PANTHER" id="PTHR39267:SF1">
    <property type="entry name" value="SURVIVAL MOTOR NEURON PROTEIN"/>
    <property type="match status" value="1"/>
</dbReference>
<dbReference type="PANTHER" id="PTHR39267">
    <property type="entry name" value="SURVIVAL MOTOR NEURON-LIKE PROTEIN 1"/>
    <property type="match status" value="1"/>
</dbReference>
<dbReference type="Pfam" id="PF20636">
    <property type="entry name" value="SMN_G2-BD"/>
    <property type="match status" value="1"/>
</dbReference>
<dbReference type="Pfam" id="PF06003">
    <property type="entry name" value="SMN_Tudor"/>
    <property type="match status" value="1"/>
</dbReference>
<dbReference type="Pfam" id="PF20635">
    <property type="entry name" value="SMN_YG-box"/>
    <property type="match status" value="1"/>
</dbReference>
<dbReference type="SMART" id="SM00333">
    <property type="entry name" value="TUDOR"/>
    <property type="match status" value="1"/>
</dbReference>
<dbReference type="SUPFAM" id="SSF63748">
    <property type="entry name" value="Tudor/PWWP/MBT"/>
    <property type="match status" value="1"/>
</dbReference>
<dbReference type="PROSITE" id="PS50304">
    <property type="entry name" value="TUDOR"/>
    <property type="match status" value="1"/>
</dbReference>
<sequence length="287" mass="31010">MGGGGGLPEPEDSVLFRRGTGQSDDSDIWDDTALIKAYDKAVASFKHALKNGDISEASDKPKSTPKRKPAKKNKSQKKNATTALKQWKVGDKCSAVWSEDGCIYPATIASIDFKRETCVVVYTGYGNREEQNVSDLLSPACEVANNVEQDTQENENESQISTDESENSSRSPGNKPNNIKSKAAPWNSFLPPPPPMSGSGLGPGKPGVKFSGPPPPPPPPHFLSCWLPPFPSGPPIIPPPPPICPDSLDDADALGSMLISWYMSGYHTGYYMGFKQNQKEGRCSHFN</sequence>